<reference key="1">
    <citation type="journal article" date="2007" name="Genome Biol.">
        <title>Comparison of Francisella tularensis genomes reveals evolutionary events associated with the emergence of human pathogenic strains.</title>
        <authorList>
            <person name="Rohmer L."/>
            <person name="Fong C."/>
            <person name="Abmayr S."/>
            <person name="Wasnick M."/>
            <person name="Larson Freeman T.J."/>
            <person name="Radey M."/>
            <person name="Guina T."/>
            <person name="Svensson K."/>
            <person name="Hayden H.S."/>
            <person name="Jacobs M."/>
            <person name="Gallagher L.A."/>
            <person name="Manoil C."/>
            <person name="Ernst R.K."/>
            <person name="Drees B."/>
            <person name="Buckley D."/>
            <person name="Haugen E."/>
            <person name="Bovee D."/>
            <person name="Zhou Y."/>
            <person name="Chang J."/>
            <person name="Levy R."/>
            <person name="Lim R."/>
            <person name="Gillett W."/>
            <person name="Guenthener D."/>
            <person name="Kang A."/>
            <person name="Shaffer S.A."/>
            <person name="Taylor G."/>
            <person name="Chen J."/>
            <person name="Gallis B."/>
            <person name="D'Argenio D.A."/>
            <person name="Forsman M."/>
            <person name="Olson M.V."/>
            <person name="Goodlett D.R."/>
            <person name="Kaul R."/>
            <person name="Miller S.I."/>
            <person name="Brittnacher M.J."/>
        </authorList>
    </citation>
    <scope>NUCLEOTIDE SEQUENCE [LARGE SCALE GENOMIC DNA]</scope>
    <source>
        <strain>U112</strain>
    </source>
</reference>
<gene>
    <name evidence="1" type="primary">trpD</name>
    <name type="ordered locus">FTN_1776</name>
</gene>
<evidence type="ECO:0000255" key="1">
    <source>
        <dbReference type="HAMAP-Rule" id="MF_00211"/>
    </source>
</evidence>
<proteinExistence type="inferred from homology"/>
<name>TRPD_FRATN</name>
<protein>
    <recommendedName>
        <fullName evidence="1">Anthranilate phosphoribosyltransferase</fullName>
        <ecNumber evidence="1">2.4.2.18</ecNumber>
    </recommendedName>
</protein>
<comment type="function">
    <text evidence="1">Catalyzes the transfer of the phosphoribosyl group of 5-phosphorylribose-1-pyrophosphate (PRPP) to anthranilate to yield N-(5'-phosphoribosyl)-anthranilate (PRA).</text>
</comment>
<comment type="catalytic activity">
    <reaction evidence="1">
        <text>N-(5-phospho-beta-D-ribosyl)anthranilate + diphosphate = 5-phospho-alpha-D-ribose 1-diphosphate + anthranilate</text>
        <dbReference type="Rhea" id="RHEA:11768"/>
        <dbReference type="ChEBI" id="CHEBI:16567"/>
        <dbReference type="ChEBI" id="CHEBI:18277"/>
        <dbReference type="ChEBI" id="CHEBI:33019"/>
        <dbReference type="ChEBI" id="CHEBI:58017"/>
        <dbReference type="EC" id="2.4.2.18"/>
    </reaction>
</comment>
<comment type="cofactor">
    <cofactor evidence="1">
        <name>Mg(2+)</name>
        <dbReference type="ChEBI" id="CHEBI:18420"/>
    </cofactor>
    <text evidence="1">Binds 2 magnesium ions per monomer.</text>
</comment>
<comment type="pathway">
    <text evidence="1">Amino-acid biosynthesis; L-tryptophan biosynthesis; L-tryptophan from chorismate: step 2/5.</text>
</comment>
<comment type="subunit">
    <text evidence="1">Homodimer.</text>
</comment>
<comment type="similarity">
    <text evidence="1">Belongs to the anthranilate phosphoribosyltransferase family.</text>
</comment>
<sequence>MISLKSIVDKLYNLEDLSYQESYQLFDYFIKGQIELPLQTSILTALKLKKETSIEIASAVEALLDNTKEFPKIKGDLAGIVGTGGDGFNTINISTTAAIVAATAGYKVAKHGGRSVSSKSGSFDLLESFGVNIELAPDQTKQCLELYNLGFLFAPFYSEGFRYIREARAILKTRTIFNILGPLINPARPNKVVIGVYSKDLILPMAKTLVNLGIDRAAVVYGSGLDEVAIHDGTYVAEIQNSQITEYKVSPADFGIDTYAIKDLEGGLPEQNREIIKQILLGKGKEAHNAAVAVNVAMLMKLYDKDDLKQNTQEVLEIIKSGKCFNTLQQVINYSNK</sequence>
<organism>
    <name type="scientific">Francisella tularensis subsp. novicida (strain U112)</name>
    <dbReference type="NCBI Taxonomy" id="401614"/>
    <lineage>
        <taxon>Bacteria</taxon>
        <taxon>Pseudomonadati</taxon>
        <taxon>Pseudomonadota</taxon>
        <taxon>Gammaproteobacteria</taxon>
        <taxon>Thiotrichales</taxon>
        <taxon>Francisellaceae</taxon>
        <taxon>Francisella</taxon>
    </lineage>
</organism>
<dbReference type="EC" id="2.4.2.18" evidence="1"/>
<dbReference type="EMBL" id="CP000439">
    <property type="protein sequence ID" value="ABK90626.1"/>
    <property type="molecule type" value="Genomic_DNA"/>
</dbReference>
<dbReference type="RefSeq" id="WP_011733737.1">
    <property type="nucleotide sequence ID" value="NC_008601.1"/>
</dbReference>
<dbReference type="SMR" id="A0Q8R1"/>
<dbReference type="KEGG" id="ftn:FTN_1776"/>
<dbReference type="KEGG" id="ftx:AW25_208"/>
<dbReference type="UniPathway" id="UPA00035">
    <property type="reaction ID" value="UER00041"/>
</dbReference>
<dbReference type="Proteomes" id="UP000000762">
    <property type="component" value="Chromosome"/>
</dbReference>
<dbReference type="GO" id="GO:0005829">
    <property type="term" value="C:cytosol"/>
    <property type="evidence" value="ECO:0007669"/>
    <property type="project" value="TreeGrafter"/>
</dbReference>
<dbReference type="GO" id="GO:0004048">
    <property type="term" value="F:anthranilate phosphoribosyltransferase activity"/>
    <property type="evidence" value="ECO:0007669"/>
    <property type="project" value="UniProtKB-UniRule"/>
</dbReference>
<dbReference type="GO" id="GO:0000287">
    <property type="term" value="F:magnesium ion binding"/>
    <property type="evidence" value="ECO:0007669"/>
    <property type="project" value="UniProtKB-UniRule"/>
</dbReference>
<dbReference type="GO" id="GO:0000162">
    <property type="term" value="P:L-tryptophan biosynthetic process"/>
    <property type="evidence" value="ECO:0007669"/>
    <property type="project" value="UniProtKB-UniRule"/>
</dbReference>
<dbReference type="FunFam" id="3.40.1030.10:FF:000002">
    <property type="entry name" value="Anthranilate phosphoribosyltransferase"/>
    <property type="match status" value="1"/>
</dbReference>
<dbReference type="Gene3D" id="3.40.1030.10">
    <property type="entry name" value="Nucleoside phosphorylase/phosphoribosyltransferase catalytic domain"/>
    <property type="match status" value="1"/>
</dbReference>
<dbReference type="Gene3D" id="1.20.970.10">
    <property type="entry name" value="Transferase, Pyrimidine Nucleoside Phosphorylase, Chain C"/>
    <property type="match status" value="1"/>
</dbReference>
<dbReference type="HAMAP" id="MF_00211">
    <property type="entry name" value="TrpD"/>
    <property type="match status" value="1"/>
</dbReference>
<dbReference type="InterPro" id="IPR005940">
    <property type="entry name" value="Anthranilate_Pribosyl_Tfrase"/>
</dbReference>
<dbReference type="InterPro" id="IPR000312">
    <property type="entry name" value="Glycosyl_Trfase_fam3"/>
</dbReference>
<dbReference type="InterPro" id="IPR017459">
    <property type="entry name" value="Glycosyl_Trfase_fam3_N_dom"/>
</dbReference>
<dbReference type="InterPro" id="IPR036320">
    <property type="entry name" value="Glycosyl_Trfase_fam3_N_dom_sf"/>
</dbReference>
<dbReference type="InterPro" id="IPR035902">
    <property type="entry name" value="Nuc_phospho_transferase"/>
</dbReference>
<dbReference type="NCBIfam" id="TIGR01245">
    <property type="entry name" value="trpD"/>
    <property type="match status" value="1"/>
</dbReference>
<dbReference type="PANTHER" id="PTHR43285">
    <property type="entry name" value="ANTHRANILATE PHOSPHORIBOSYLTRANSFERASE"/>
    <property type="match status" value="1"/>
</dbReference>
<dbReference type="PANTHER" id="PTHR43285:SF2">
    <property type="entry name" value="ANTHRANILATE PHOSPHORIBOSYLTRANSFERASE"/>
    <property type="match status" value="1"/>
</dbReference>
<dbReference type="Pfam" id="PF02885">
    <property type="entry name" value="Glycos_trans_3N"/>
    <property type="match status" value="1"/>
</dbReference>
<dbReference type="Pfam" id="PF00591">
    <property type="entry name" value="Glycos_transf_3"/>
    <property type="match status" value="1"/>
</dbReference>
<dbReference type="SUPFAM" id="SSF52418">
    <property type="entry name" value="Nucleoside phosphorylase/phosphoribosyltransferase catalytic domain"/>
    <property type="match status" value="1"/>
</dbReference>
<dbReference type="SUPFAM" id="SSF47648">
    <property type="entry name" value="Nucleoside phosphorylase/phosphoribosyltransferase N-terminal domain"/>
    <property type="match status" value="1"/>
</dbReference>
<feature type="chain" id="PRO_0000325426" description="Anthranilate phosphoribosyltransferase">
    <location>
        <begin position="1"/>
        <end position="337"/>
    </location>
</feature>
<feature type="binding site" evidence="1">
    <location>
        <position position="82"/>
    </location>
    <ligand>
        <name>5-phospho-alpha-D-ribose 1-diphosphate</name>
        <dbReference type="ChEBI" id="CHEBI:58017"/>
    </ligand>
</feature>
<feature type="binding site" evidence="1">
    <location>
        <position position="82"/>
    </location>
    <ligand>
        <name>anthranilate</name>
        <dbReference type="ChEBI" id="CHEBI:16567"/>
        <label>1</label>
    </ligand>
</feature>
<feature type="binding site" evidence="1">
    <location>
        <begin position="85"/>
        <end position="86"/>
    </location>
    <ligand>
        <name>5-phospho-alpha-D-ribose 1-diphosphate</name>
        <dbReference type="ChEBI" id="CHEBI:58017"/>
    </ligand>
</feature>
<feature type="binding site" evidence="1">
    <location>
        <position position="90"/>
    </location>
    <ligand>
        <name>5-phospho-alpha-D-ribose 1-diphosphate</name>
        <dbReference type="ChEBI" id="CHEBI:58017"/>
    </ligand>
</feature>
<feature type="binding site" evidence="1">
    <location>
        <begin position="92"/>
        <end position="95"/>
    </location>
    <ligand>
        <name>5-phospho-alpha-D-ribose 1-diphosphate</name>
        <dbReference type="ChEBI" id="CHEBI:58017"/>
    </ligand>
</feature>
<feature type="binding site" evidence="1">
    <location>
        <position position="94"/>
    </location>
    <ligand>
        <name>Mg(2+)</name>
        <dbReference type="ChEBI" id="CHEBI:18420"/>
        <label>1</label>
    </ligand>
</feature>
<feature type="binding site" evidence="1">
    <location>
        <begin position="110"/>
        <end position="118"/>
    </location>
    <ligand>
        <name>5-phospho-alpha-D-ribose 1-diphosphate</name>
        <dbReference type="ChEBI" id="CHEBI:58017"/>
    </ligand>
</feature>
<feature type="binding site" evidence="1">
    <location>
        <position position="122"/>
    </location>
    <ligand>
        <name>5-phospho-alpha-D-ribose 1-diphosphate</name>
        <dbReference type="ChEBI" id="CHEBI:58017"/>
    </ligand>
</feature>
<feature type="binding site" evidence="1">
    <location>
        <position position="168"/>
    </location>
    <ligand>
        <name>anthranilate</name>
        <dbReference type="ChEBI" id="CHEBI:16567"/>
        <label>2</label>
    </ligand>
</feature>
<feature type="binding site" evidence="1">
    <location>
        <position position="226"/>
    </location>
    <ligand>
        <name>Mg(2+)</name>
        <dbReference type="ChEBI" id="CHEBI:18420"/>
        <label>2</label>
    </ligand>
</feature>
<feature type="binding site" evidence="1">
    <location>
        <position position="227"/>
    </location>
    <ligand>
        <name>Mg(2+)</name>
        <dbReference type="ChEBI" id="CHEBI:18420"/>
        <label>1</label>
    </ligand>
</feature>
<feature type="binding site" evidence="1">
    <location>
        <position position="227"/>
    </location>
    <ligand>
        <name>Mg(2+)</name>
        <dbReference type="ChEBI" id="CHEBI:18420"/>
        <label>2</label>
    </ligand>
</feature>
<accession>A0Q8R1</accession>
<keyword id="KW-0028">Amino-acid biosynthesis</keyword>
<keyword id="KW-0057">Aromatic amino acid biosynthesis</keyword>
<keyword id="KW-0328">Glycosyltransferase</keyword>
<keyword id="KW-0460">Magnesium</keyword>
<keyword id="KW-0479">Metal-binding</keyword>
<keyword id="KW-0808">Transferase</keyword>
<keyword id="KW-0822">Tryptophan biosynthesis</keyword>